<reference key="1">
    <citation type="journal article" date="1997" name="Science">
        <title>The complete genome sequence of Escherichia coli K-12.</title>
        <authorList>
            <person name="Blattner F.R."/>
            <person name="Plunkett G. III"/>
            <person name="Bloch C.A."/>
            <person name="Perna N.T."/>
            <person name="Burland V."/>
            <person name="Riley M."/>
            <person name="Collado-Vides J."/>
            <person name="Glasner J.D."/>
            <person name="Rode C.K."/>
            <person name="Mayhew G.F."/>
            <person name="Gregor J."/>
            <person name="Davis N.W."/>
            <person name="Kirkpatrick H.A."/>
            <person name="Goeden M.A."/>
            <person name="Rose D.J."/>
            <person name="Mau B."/>
            <person name="Shao Y."/>
        </authorList>
    </citation>
    <scope>NUCLEOTIDE SEQUENCE [LARGE SCALE GENOMIC DNA]</scope>
    <source>
        <strain>K12 / MG1655 / ATCC 47076</strain>
    </source>
</reference>
<reference key="2">
    <citation type="journal article" date="2006" name="Mol. Syst. Biol.">
        <title>Highly accurate genome sequences of Escherichia coli K-12 strains MG1655 and W3110.</title>
        <authorList>
            <person name="Hayashi K."/>
            <person name="Morooka N."/>
            <person name="Yamamoto Y."/>
            <person name="Fujita K."/>
            <person name="Isono K."/>
            <person name="Choi S."/>
            <person name="Ohtsubo E."/>
            <person name="Baba T."/>
            <person name="Wanner B.L."/>
            <person name="Mori H."/>
            <person name="Horiuchi T."/>
        </authorList>
    </citation>
    <scope>NUCLEOTIDE SEQUENCE [LARGE SCALE GENOMIC DNA]</scope>
    <source>
        <strain>K12 / W3110 / ATCC 27325 / DSM 5911</strain>
    </source>
</reference>
<reference key="3">
    <citation type="journal article" date="1986" name="J. Biol. Chem.">
        <title>Cloning, sequencing, and species relatedness of the Escherichia coli cca gene encoding the enzyme tRNA nucleotidyltransferase.</title>
        <authorList>
            <person name="Cudny H."/>
            <person name="Lupski J.R."/>
            <person name="Godson G.N."/>
            <person name="Deutscher M.P."/>
        </authorList>
    </citation>
    <scope>NUCLEOTIDE SEQUENCE [GENOMIC DNA] OF 80-206</scope>
</reference>
<reference key="4">
    <citation type="unpublished observations" date="1994-08">
        <authorList>
            <person name="Rudd K.E."/>
        </authorList>
    </citation>
    <scope>IDENTIFICATION</scope>
</reference>
<protein>
    <recommendedName>
        <fullName>Uncharacterized protein YgiM</fullName>
    </recommendedName>
</protein>
<sequence length="206" mass="23076">MPKLRLIGLTLLALSATAVSHAEETRYVSDELNTWVRSGPGDHYRLVGTVNAGEEVTLLQTDANTNYAQVKDSSGRTAWIPLKQLSTEPSLRSRVPDLENQVKTLTDKLTNIDNTWNQRTAEMQQKVAQSDSVINGLKEENQKLKNELIVAQKKVDAASVQLDDKQRTIIMQWFMYGGGVLGLGLLLGLVLPHLIPSRKRKDRWMN</sequence>
<keyword id="KW-0472">Membrane</keyword>
<keyword id="KW-1185">Reference proteome</keyword>
<keyword id="KW-0732">Signal</keyword>
<keyword id="KW-0812">Transmembrane</keyword>
<keyword id="KW-1133">Transmembrane helix</keyword>
<dbReference type="EMBL" id="U28379">
    <property type="protein sequence ID" value="AAA89135.1"/>
    <property type="molecule type" value="Genomic_DNA"/>
</dbReference>
<dbReference type="EMBL" id="U00096">
    <property type="protein sequence ID" value="AAC76091.1"/>
    <property type="molecule type" value="Genomic_DNA"/>
</dbReference>
<dbReference type="EMBL" id="AP009048">
    <property type="protein sequence ID" value="BAE77106.1"/>
    <property type="molecule type" value="Genomic_DNA"/>
</dbReference>
<dbReference type="EMBL" id="M12788">
    <property type="status" value="NOT_ANNOTATED_CDS"/>
    <property type="molecule type" value="Genomic_DNA"/>
</dbReference>
<dbReference type="PIR" id="E65093">
    <property type="entry name" value="E65093"/>
</dbReference>
<dbReference type="RefSeq" id="NP_417527.1">
    <property type="nucleotide sequence ID" value="NC_000913.3"/>
</dbReference>
<dbReference type="RefSeq" id="WP_001125331.1">
    <property type="nucleotide sequence ID" value="NZ_STEB01000001.1"/>
</dbReference>
<dbReference type="SMR" id="P0ADT8"/>
<dbReference type="BioGRID" id="4259254">
    <property type="interactions" value="18"/>
</dbReference>
<dbReference type="FunCoup" id="P0ADT8">
    <property type="interactions" value="120"/>
</dbReference>
<dbReference type="IntAct" id="P0ADT8">
    <property type="interactions" value="3"/>
</dbReference>
<dbReference type="STRING" id="511145.b3055"/>
<dbReference type="jPOST" id="P0ADT8"/>
<dbReference type="PaxDb" id="511145-b3055"/>
<dbReference type="EnsemblBacteria" id="AAC76091">
    <property type="protein sequence ID" value="AAC76091"/>
    <property type="gene ID" value="b3055"/>
</dbReference>
<dbReference type="GeneID" id="947555"/>
<dbReference type="KEGG" id="ecj:JW3027"/>
<dbReference type="KEGG" id="eco:b3055"/>
<dbReference type="KEGG" id="ecoc:C3026_16695"/>
<dbReference type="PATRIC" id="fig|1411691.4.peg.3676"/>
<dbReference type="EchoBASE" id="EB2330"/>
<dbReference type="eggNOG" id="COG4991">
    <property type="taxonomic scope" value="Bacteria"/>
</dbReference>
<dbReference type="HOGENOM" id="CLU_094106_0_1_6"/>
<dbReference type="InParanoid" id="P0ADT8"/>
<dbReference type="OMA" id="HKGREGW"/>
<dbReference type="OrthoDB" id="9790951at2"/>
<dbReference type="PhylomeDB" id="P0ADT8"/>
<dbReference type="BioCyc" id="EcoCyc:EG12434-MONOMER"/>
<dbReference type="PRO" id="PR:P0ADT8"/>
<dbReference type="Proteomes" id="UP000000625">
    <property type="component" value="Chromosome"/>
</dbReference>
<dbReference type="GO" id="GO:0005829">
    <property type="term" value="C:cytosol"/>
    <property type="evidence" value="ECO:0000314"/>
    <property type="project" value="EcoCyc"/>
</dbReference>
<dbReference type="GO" id="GO:0005886">
    <property type="term" value="C:plasma membrane"/>
    <property type="evidence" value="ECO:0000314"/>
    <property type="project" value="EcoCyc"/>
</dbReference>
<dbReference type="FunFam" id="2.30.30.40:FF:000104">
    <property type="entry name" value="Bacterial SH3 domain protein"/>
    <property type="match status" value="1"/>
</dbReference>
<dbReference type="Gene3D" id="1.20.1170.10">
    <property type="match status" value="1"/>
</dbReference>
<dbReference type="Gene3D" id="2.30.30.40">
    <property type="entry name" value="SH3 Domains"/>
    <property type="match status" value="1"/>
</dbReference>
<dbReference type="InterPro" id="IPR003646">
    <property type="entry name" value="SH3-like_bac-type"/>
</dbReference>
<dbReference type="InterPro" id="IPR016476">
    <property type="entry name" value="SH3_dom_pro"/>
</dbReference>
<dbReference type="NCBIfam" id="TIGR04211">
    <property type="entry name" value="SH3_and_anchor"/>
    <property type="match status" value="1"/>
</dbReference>
<dbReference type="Pfam" id="PF08239">
    <property type="entry name" value="SH3_3"/>
    <property type="match status" value="1"/>
</dbReference>
<dbReference type="PIRSF" id="PIRSF006158">
    <property type="entry name" value="UCP006158_SH3"/>
    <property type="match status" value="1"/>
</dbReference>
<dbReference type="SMART" id="SM00287">
    <property type="entry name" value="SH3b"/>
    <property type="match status" value="1"/>
</dbReference>
<dbReference type="PROSITE" id="PS51781">
    <property type="entry name" value="SH3B"/>
    <property type="match status" value="1"/>
</dbReference>
<gene>
    <name type="primary">ygiM</name>
    <name type="ordered locus">b3055</name>
    <name type="ordered locus">JW3027</name>
</gene>
<feature type="signal peptide" evidence="1">
    <location>
        <begin position="1"/>
        <end position="22"/>
    </location>
</feature>
<feature type="chain" id="PRO_0000013900" description="Uncharacterized protein YgiM">
    <location>
        <begin position="23"/>
        <end position="206"/>
    </location>
</feature>
<feature type="transmembrane region" description="Helical" evidence="1">
    <location>
        <begin position="169"/>
        <end position="191"/>
    </location>
</feature>
<feature type="domain" description="SH3b" evidence="2">
    <location>
        <begin position="23"/>
        <end position="89"/>
    </location>
</feature>
<accession>P0ADT8</accession>
<accession>P39202</accession>
<accession>Q2M9F0</accession>
<proteinExistence type="inferred from homology"/>
<organism>
    <name type="scientific">Escherichia coli (strain K12)</name>
    <dbReference type="NCBI Taxonomy" id="83333"/>
    <lineage>
        <taxon>Bacteria</taxon>
        <taxon>Pseudomonadati</taxon>
        <taxon>Pseudomonadota</taxon>
        <taxon>Gammaproteobacteria</taxon>
        <taxon>Enterobacterales</taxon>
        <taxon>Enterobacteriaceae</taxon>
        <taxon>Escherichia</taxon>
    </lineage>
</organism>
<comment type="subcellular location">
    <subcellularLocation>
        <location evidence="3">Membrane</location>
        <topology evidence="3">Single-pass membrane protein</topology>
    </subcellularLocation>
</comment>
<comment type="similarity">
    <text evidence="3">To H.influenzae HI_1605.</text>
</comment>
<evidence type="ECO:0000255" key="1"/>
<evidence type="ECO:0000255" key="2">
    <source>
        <dbReference type="PROSITE-ProRule" id="PRU01117"/>
    </source>
</evidence>
<evidence type="ECO:0000305" key="3"/>
<name>YGIM_ECOLI</name>